<comment type="function">
    <text evidence="2">GTP hydrolase that promotes the GTP-dependent binding of aminoacyl-tRNA to the A-site of ribosomes during protein biosynthesis.</text>
</comment>
<comment type="catalytic activity">
    <reaction evidence="2">
        <text>GTP + H2O = GDP + phosphate + H(+)</text>
        <dbReference type="Rhea" id="RHEA:19669"/>
        <dbReference type="ChEBI" id="CHEBI:15377"/>
        <dbReference type="ChEBI" id="CHEBI:15378"/>
        <dbReference type="ChEBI" id="CHEBI:37565"/>
        <dbReference type="ChEBI" id="CHEBI:43474"/>
        <dbReference type="ChEBI" id="CHEBI:58189"/>
        <dbReference type="EC" id="3.6.5.3"/>
    </reaction>
    <physiologicalReaction direction="left-to-right" evidence="2">
        <dbReference type="Rhea" id="RHEA:19670"/>
    </physiologicalReaction>
</comment>
<comment type="subunit">
    <text evidence="2">Monomer.</text>
</comment>
<comment type="subcellular location">
    <subcellularLocation>
        <location evidence="2">Cytoplasm</location>
    </subcellularLocation>
</comment>
<comment type="similarity">
    <text evidence="2">Belongs to the TRAFAC class translation factor GTPase superfamily. Classic translation factor GTPase family. EF-Tu/EF-1A subfamily.</text>
</comment>
<name>EFTU_FRATF</name>
<organism>
    <name type="scientific">Francisella tularensis subsp. holarctica (strain FTNF002-00 / FTA)</name>
    <dbReference type="NCBI Taxonomy" id="458234"/>
    <lineage>
        <taxon>Bacteria</taxon>
        <taxon>Pseudomonadati</taxon>
        <taxon>Pseudomonadota</taxon>
        <taxon>Gammaproteobacteria</taxon>
        <taxon>Thiotrichales</taxon>
        <taxon>Francisellaceae</taxon>
        <taxon>Francisella</taxon>
    </lineage>
</organism>
<sequence length="394" mass="43391">MAKEKFERSKPHVNVGTIGHVDHGKTTLTAAITKVMAEKNGGMARKFDEIDSAPEEKARGITINTSHVEYESPNRHYAHVDCPGHADYVKNMITGAAQMDGAILVCSAADGPMPQTREHILLSRQVGVPKIVVFLNKCDMVDDEELLELVEMEVRELLDQYEFPGDDTPVIMGSALRAIEGDEAYVEKIVELVQAMDDYIPAPERDTEKPFILPIEDVFSISGRGTVVTGRIERGVVNVGDEVEVVGIRPTQKTTVTGVEMFRKLLDRGEAGDNVGILVRGLKRDDVERGQVLCKPGSIKPHTKFEAEVYVLSKEEGGRHTPFFKGYRPQFYFRTTDITGAVELPEGVEMVMPGDNVKMTITLINPIAMDEGLRFAIREGGRTVGAGVVAKIIE</sequence>
<accession>A7NEC7</accession>
<reference key="1">
    <citation type="journal article" date="2009" name="PLoS ONE">
        <title>Complete genome sequence of Francisella tularensis subspecies holarctica FTNF002-00.</title>
        <authorList>
            <person name="Barabote R.D."/>
            <person name="Xie G."/>
            <person name="Brettin T.S."/>
            <person name="Hinrichs S.H."/>
            <person name="Fey P.D."/>
            <person name="Jay J.J."/>
            <person name="Engle J.L."/>
            <person name="Godbole S.D."/>
            <person name="Noronha J.M."/>
            <person name="Scheuermann R.H."/>
            <person name="Zhou L.W."/>
            <person name="Lion C."/>
            <person name="Dempsey M.P."/>
        </authorList>
    </citation>
    <scope>NUCLEOTIDE SEQUENCE [LARGE SCALE GENOMIC DNA]</scope>
    <source>
        <strain>FTNF002-00 / FTA</strain>
    </source>
</reference>
<dbReference type="EC" id="3.6.5.3" evidence="2"/>
<dbReference type="EMBL" id="CP000803">
    <property type="protein sequence ID" value="ABU62330.1"/>
    <property type="molecule type" value="Genomic_DNA"/>
</dbReference>
<dbReference type="RefSeq" id="WP_003024794.1">
    <property type="nucleotide sequence ID" value="NC_009749.1"/>
</dbReference>
<dbReference type="SMR" id="A7NEC7"/>
<dbReference type="KEGG" id="fta:FTA_1855"/>
<dbReference type="HOGENOM" id="CLU_007265_0_0_6"/>
<dbReference type="GO" id="GO:0005829">
    <property type="term" value="C:cytosol"/>
    <property type="evidence" value="ECO:0007669"/>
    <property type="project" value="TreeGrafter"/>
</dbReference>
<dbReference type="GO" id="GO:0005525">
    <property type="term" value="F:GTP binding"/>
    <property type="evidence" value="ECO:0007669"/>
    <property type="project" value="UniProtKB-UniRule"/>
</dbReference>
<dbReference type="GO" id="GO:0003924">
    <property type="term" value="F:GTPase activity"/>
    <property type="evidence" value="ECO:0007669"/>
    <property type="project" value="InterPro"/>
</dbReference>
<dbReference type="GO" id="GO:0097216">
    <property type="term" value="F:guanosine tetraphosphate binding"/>
    <property type="evidence" value="ECO:0007669"/>
    <property type="project" value="UniProtKB-ARBA"/>
</dbReference>
<dbReference type="GO" id="GO:0003746">
    <property type="term" value="F:translation elongation factor activity"/>
    <property type="evidence" value="ECO:0007669"/>
    <property type="project" value="UniProtKB-UniRule"/>
</dbReference>
<dbReference type="CDD" id="cd01884">
    <property type="entry name" value="EF_Tu"/>
    <property type="match status" value="1"/>
</dbReference>
<dbReference type="CDD" id="cd03697">
    <property type="entry name" value="EFTU_II"/>
    <property type="match status" value="1"/>
</dbReference>
<dbReference type="CDD" id="cd03707">
    <property type="entry name" value="EFTU_III"/>
    <property type="match status" value="1"/>
</dbReference>
<dbReference type="FunFam" id="2.40.30.10:FF:000001">
    <property type="entry name" value="Elongation factor Tu"/>
    <property type="match status" value="1"/>
</dbReference>
<dbReference type="FunFam" id="3.40.50.300:FF:000003">
    <property type="entry name" value="Elongation factor Tu"/>
    <property type="match status" value="1"/>
</dbReference>
<dbReference type="Gene3D" id="3.40.50.300">
    <property type="entry name" value="P-loop containing nucleotide triphosphate hydrolases"/>
    <property type="match status" value="1"/>
</dbReference>
<dbReference type="Gene3D" id="2.40.30.10">
    <property type="entry name" value="Translation factors"/>
    <property type="match status" value="2"/>
</dbReference>
<dbReference type="HAMAP" id="MF_00118_B">
    <property type="entry name" value="EF_Tu_B"/>
    <property type="match status" value="1"/>
</dbReference>
<dbReference type="InterPro" id="IPR041709">
    <property type="entry name" value="EF-Tu_GTP-bd"/>
</dbReference>
<dbReference type="InterPro" id="IPR050055">
    <property type="entry name" value="EF-Tu_GTPase"/>
</dbReference>
<dbReference type="InterPro" id="IPR004161">
    <property type="entry name" value="EFTu-like_2"/>
</dbReference>
<dbReference type="InterPro" id="IPR033720">
    <property type="entry name" value="EFTU_2"/>
</dbReference>
<dbReference type="InterPro" id="IPR031157">
    <property type="entry name" value="G_TR_CS"/>
</dbReference>
<dbReference type="InterPro" id="IPR027417">
    <property type="entry name" value="P-loop_NTPase"/>
</dbReference>
<dbReference type="InterPro" id="IPR005225">
    <property type="entry name" value="Small_GTP-bd"/>
</dbReference>
<dbReference type="InterPro" id="IPR000795">
    <property type="entry name" value="T_Tr_GTP-bd_dom"/>
</dbReference>
<dbReference type="InterPro" id="IPR009000">
    <property type="entry name" value="Transl_B-barrel_sf"/>
</dbReference>
<dbReference type="InterPro" id="IPR009001">
    <property type="entry name" value="Transl_elong_EF1A/Init_IF2_C"/>
</dbReference>
<dbReference type="InterPro" id="IPR004541">
    <property type="entry name" value="Transl_elong_EFTu/EF1A_bac/org"/>
</dbReference>
<dbReference type="InterPro" id="IPR004160">
    <property type="entry name" value="Transl_elong_EFTu/EF1A_C"/>
</dbReference>
<dbReference type="NCBIfam" id="TIGR00485">
    <property type="entry name" value="EF-Tu"/>
    <property type="match status" value="1"/>
</dbReference>
<dbReference type="NCBIfam" id="NF000766">
    <property type="entry name" value="PRK00049.1"/>
    <property type="match status" value="1"/>
</dbReference>
<dbReference type="NCBIfam" id="NF009372">
    <property type="entry name" value="PRK12735.1"/>
    <property type="match status" value="1"/>
</dbReference>
<dbReference type="NCBIfam" id="NF009373">
    <property type="entry name" value="PRK12736.1"/>
    <property type="match status" value="1"/>
</dbReference>
<dbReference type="NCBIfam" id="TIGR00231">
    <property type="entry name" value="small_GTP"/>
    <property type="match status" value="1"/>
</dbReference>
<dbReference type="PANTHER" id="PTHR43721:SF22">
    <property type="entry name" value="ELONGATION FACTOR TU, MITOCHONDRIAL"/>
    <property type="match status" value="1"/>
</dbReference>
<dbReference type="PANTHER" id="PTHR43721">
    <property type="entry name" value="ELONGATION FACTOR TU-RELATED"/>
    <property type="match status" value="1"/>
</dbReference>
<dbReference type="Pfam" id="PF00009">
    <property type="entry name" value="GTP_EFTU"/>
    <property type="match status" value="1"/>
</dbReference>
<dbReference type="Pfam" id="PF03144">
    <property type="entry name" value="GTP_EFTU_D2"/>
    <property type="match status" value="1"/>
</dbReference>
<dbReference type="Pfam" id="PF03143">
    <property type="entry name" value="GTP_EFTU_D3"/>
    <property type="match status" value="1"/>
</dbReference>
<dbReference type="PRINTS" id="PR00315">
    <property type="entry name" value="ELONGATNFCT"/>
</dbReference>
<dbReference type="SUPFAM" id="SSF50465">
    <property type="entry name" value="EF-Tu/eEF-1alpha/eIF2-gamma C-terminal domain"/>
    <property type="match status" value="1"/>
</dbReference>
<dbReference type="SUPFAM" id="SSF52540">
    <property type="entry name" value="P-loop containing nucleoside triphosphate hydrolases"/>
    <property type="match status" value="1"/>
</dbReference>
<dbReference type="SUPFAM" id="SSF50447">
    <property type="entry name" value="Translation proteins"/>
    <property type="match status" value="1"/>
</dbReference>
<dbReference type="PROSITE" id="PS00301">
    <property type="entry name" value="G_TR_1"/>
    <property type="match status" value="1"/>
</dbReference>
<dbReference type="PROSITE" id="PS51722">
    <property type="entry name" value="G_TR_2"/>
    <property type="match status" value="1"/>
</dbReference>
<proteinExistence type="inferred from homology"/>
<evidence type="ECO:0000250" key="1"/>
<evidence type="ECO:0000255" key="2">
    <source>
        <dbReference type="HAMAP-Rule" id="MF_00118"/>
    </source>
</evidence>
<keyword id="KW-0963">Cytoplasm</keyword>
<keyword id="KW-0251">Elongation factor</keyword>
<keyword id="KW-0342">GTP-binding</keyword>
<keyword id="KW-0378">Hydrolase</keyword>
<keyword id="KW-0460">Magnesium</keyword>
<keyword id="KW-0479">Metal-binding</keyword>
<keyword id="KW-0547">Nucleotide-binding</keyword>
<keyword id="KW-0648">Protein biosynthesis</keyword>
<feature type="chain" id="PRO_1000015660" description="Elongation factor Tu">
    <location>
        <begin position="1"/>
        <end position="394"/>
    </location>
</feature>
<feature type="domain" description="tr-type G">
    <location>
        <begin position="10"/>
        <end position="204"/>
    </location>
</feature>
<feature type="region of interest" description="G1" evidence="1">
    <location>
        <begin position="19"/>
        <end position="26"/>
    </location>
</feature>
<feature type="region of interest" description="G2" evidence="1">
    <location>
        <begin position="60"/>
        <end position="64"/>
    </location>
</feature>
<feature type="region of interest" description="G3" evidence="1">
    <location>
        <begin position="81"/>
        <end position="84"/>
    </location>
</feature>
<feature type="region of interest" description="G4" evidence="1">
    <location>
        <begin position="136"/>
        <end position="139"/>
    </location>
</feature>
<feature type="region of interest" description="G5" evidence="1">
    <location>
        <begin position="174"/>
        <end position="176"/>
    </location>
</feature>
<feature type="binding site" evidence="2">
    <location>
        <begin position="19"/>
        <end position="26"/>
    </location>
    <ligand>
        <name>GTP</name>
        <dbReference type="ChEBI" id="CHEBI:37565"/>
    </ligand>
</feature>
<feature type="binding site" evidence="2">
    <location>
        <position position="26"/>
    </location>
    <ligand>
        <name>Mg(2+)</name>
        <dbReference type="ChEBI" id="CHEBI:18420"/>
    </ligand>
</feature>
<feature type="binding site" evidence="2">
    <location>
        <begin position="81"/>
        <end position="85"/>
    </location>
    <ligand>
        <name>GTP</name>
        <dbReference type="ChEBI" id="CHEBI:37565"/>
    </ligand>
</feature>
<feature type="binding site" evidence="2">
    <location>
        <begin position="136"/>
        <end position="139"/>
    </location>
    <ligand>
        <name>GTP</name>
        <dbReference type="ChEBI" id="CHEBI:37565"/>
    </ligand>
</feature>
<protein>
    <recommendedName>
        <fullName evidence="2">Elongation factor Tu</fullName>
        <shortName evidence="2">EF-Tu</shortName>
        <ecNumber evidence="2">3.6.5.3</ecNumber>
    </recommendedName>
</protein>
<gene>
    <name evidence="2" type="primary">tuf</name>
    <name type="ordered locus">FTA_1855</name>
</gene>